<reference key="1">
    <citation type="journal article" date="2001" name="DNA Res.">
        <title>Complete genomic sequence of the filamentous nitrogen-fixing cyanobacterium Anabaena sp. strain PCC 7120.</title>
        <authorList>
            <person name="Kaneko T."/>
            <person name="Nakamura Y."/>
            <person name="Wolk C.P."/>
            <person name="Kuritz T."/>
            <person name="Sasamoto S."/>
            <person name="Watanabe A."/>
            <person name="Iriguchi M."/>
            <person name="Ishikawa A."/>
            <person name="Kawashima K."/>
            <person name="Kimura T."/>
            <person name="Kishida Y."/>
            <person name="Kohara M."/>
            <person name="Matsumoto M."/>
            <person name="Matsuno A."/>
            <person name="Muraki A."/>
            <person name="Nakazaki N."/>
            <person name="Shimpo S."/>
            <person name="Sugimoto M."/>
            <person name="Takazawa M."/>
            <person name="Yamada M."/>
            <person name="Yasuda M."/>
            <person name="Tabata S."/>
        </authorList>
    </citation>
    <scope>NUCLEOTIDE SEQUENCE [LARGE SCALE GENOMIC DNA]</scope>
    <source>
        <strain>PCC 7120 / SAG 25.82 / UTEX 2576</strain>
    </source>
</reference>
<feature type="signal peptide" evidence="2">
    <location>
        <begin position="1"/>
        <end position="22"/>
    </location>
</feature>
<feature type="chain" id="PRO_0000239673" description="Photosystem II assembly lipoprotein Ycf48" evidence="2">
    <location>
        <begin position="23"/>
        <end position="339"/>
    </location>
</feature>
<feature type="lipid moiety-binding region" description="N-palmitoyl cysteine" evidence="1">
    <location>
        <position position="23"/>
    </location>
</feature>
<feature type="lipid moiety-binding region" description="S-diacylglycerol cysteine" evidence="1">
    <location>
        <position position="23"/>
    </location>
</feature>
<keyword id="KW-0449">Lipoprotein</keyword>
<keyword id="KW-0472">Membrane</keyword>
<keyword id="KW-0564">Palmitate</keyword>
<keyword id="KW-0602">Photosynthesis</keyword>
<keyword id="KW-0604">Photosystem II</keyword>
<keyword id="KW-1185">Reference proteome</keyword>
<keyword id="KW-0732">Signal</keyword>
<keyword id="KW-0793">Thylakoid</keyword>
<protein>
    <recommendedName>
        <fullName evidence="2">Photosystem II assembly lipoprotein Ycf48</fullName>
    </recommendedName>
</protein>
<accession>Q8YQI3</accession>
<proteinExistence type="inferred from homology"/>
<organism>
    <name type="scientific">Nostoc sp. (strain PCC 7120 / SAG 25.82 / UTEX 2576)</name>
    <dbReference type="NCBI Taxonomy" id="103690"/>
    <lineage>
        <taxon>Bacteria</taxon>
        <taxon>Bacillati</taxon>
        <taxon>Cyanobacteriota</taxon>
        <taxon>Cyanophyceae</taxon>
        <taxon>Nostocales</taxon>
        <taxon>Nostocaceae</taxon>
        <taxon>Nostoc</taxon>
    </lineage>
</organism>
<evidence type="ECO:0000250" key="1">
    <source>
        <dbReference type="UniProtKB" id="P73069"/>
    </source>
</evidence>
<evidence type="ECO:0000255" key="2">
    <source>
        <dbReference type="HAMAP-Rule" id="MF_01348"/>
    </source>
</evidence>
<gene>
    <name evidence="2" type="primary">ycf48</name>
    <name type="ordered locus">alr3844</name>
</gene>
<dbReference type="EMBL" id="BA000019">
    <property type="protein sequence ID" value="BAB75543.1"/>
    <property type="molecule type" value="Genomic_DNA"/>
</dbReference>
<dbReference type="PIR" id="AE2286">
    <property type="entry name" value="AE2286"/>
</dbReference>
<dbReference type="RefSeq" id="WP_010997985.1">
    <property type="nucleotide sequence ID" value="NZ_RSCN01000011.1"/>
</dbReference>
<dbReference type="SMR" id="Q8YQI3"/>
<dbReference type="STRING" id="103690.gene:10495886"/>
<dbReference type="KEGG" id="ana:alr3844"/>
<dbReference type="eggNOG" id="COG4447">
    <property type="taxonomic scope" value="Bacteria"/>
</dbReference>
<dbReference type="OrthoDB" id="9813892at2"/>
<dbReference type="Proteomes" id="UP000002483">
    <property type="component" value="Chromosome"/>
</dbReference>
<dbReference type="GO" id="GO:0009523">
    <property type="term" value="C:photosystem II"/>
    <property type="evidence" value="ECO:0007669"/>
    <property type="project" value="UniProtKB-KW"/>
</dbReference>
<dbReference type="GO" id="GO:0031676">
    <property type="term" value="C:plasma membrane-derived thylakoid membrane"/>
    <property type="evidence" value="ECO:0007669"/>
    <property type="project" value="UniProtKB-SubCell"/>
</dbReference>
<dbReference type="GO" id="GO:0031977">
    <property type="term" value="C:thylakoid lumen"/>
    <property type="evidence" value="ECO:0007669"/>
    <property type="project" value="UniProtKB-UniRule"/>
</dbReference>
<dbReference type="GO" id="GO:0015979">
    <property type="term" value="P:photosynthesis"/>
    <property type="evidence" value="ECO:0007669"/>
    <property type="project" value="UniProtKB-KW"/>
</dbReference>
<dbReference type="Gene3D" id="2.130.10.10">
    <property type="entry name" value="YVTN repeat-like/Quinoprotein amine dehydrogenase"/>
    <property type="match status" value="2"/>
</dbReference>
<dbReference type="HAMAP" id="MF_01348">
    <property type="entry name" value="Ycf48"/>
    <property type="match status" value="1"/>
</dbReference>
<dbReference type="InterPro" id="IPR028203">
    <property type="entry name" value="PSII_CF48-like_dom"/>
</dbReference>
<dbReference type="InterPro" id="IPR015943">
    <property type="entry name" value="WD40/YVTN_repeat-like_dom_sf"/>
</dbReference>
<dbReference type="InterPro" id="IPR016705">
    <property type="entry name" value="Ycf48/Hcf136"/>
</dbReference>
<dbReference type="NCBIfam" id="NF010237">
    <property type="entry name" value="PRK13684.1"/>
    <property type="match status" value="1"/>
</dbReference>
<dbReference type="PANTHER" id="PTHR47199">
    <property type="entry name" value="PHOTOSYSTEM II STABILITY/ASSEMBLY FACTOR HCF136, CHLOROPLASTIC"/>
    <property type="match status" value="1"/>
</dbReference>
<dbReference type="PANTHER" id="PTHR47199:SF2">
    <property type="entry name" value="PHOTOSYSTEM II STABILITY_ASSEMBLY FACTOR HCF136, CHLOROPLASTIC"/>
    <property type="match status" value="1"/>
</dbReference>
<dbReference type="Pfam" id="PF14870">
    <property type="entry name" value="PSII_BNR"/>
    <property type="match status" value="1"/>
</dbReference>
<dbReference type="PIRSF" id="PIRSF017875">
    <property type="entry name" value="PSII_HCF136"/>
    <property type="match status" value="1"/>
</dbReference>
<dbReference type="SUPFAM" id="SSF110296">
    <property type="entry name" value="Oligoxyloglucan reducing end-specific cellobiohydrolase"/>
    <property type="match status" value="1"/>
</dbReference>
<name>YCF48_NOSS1</name>
<comment type="function">
    <text evidence="2">A factor required for optimal assembly of photosystem II (PSII), acting in the early stages of PSII assembly. Also plays a role in replacement of photodamaged D1 (psbA). Assists YidC in synthesis of chlorophyll-binding proteins.</text>
</comment>
<comment type="subunit">
    <text evidence="2">Part of early PSII assembly complexes which includes D1 (psbA) and PsbI; not found in mature PSII. Binds to the lumenal side of PSII complexes. Interacts with YidC.</text>
</comment>
<comment type="subcellular location">
    <subcellularLocation>
        <location evidence="1">Cellular thylakoid membrane</location>
        <topology evidence="1">Lipid-anchor</topology>
        <orientation evidence="1">Lumenal side</orientation>
    </subcellularLocation>
    <text evidence="2">Associated with a PSII precusor complex on the lumenal side of the thylakoid membrane.</text>
</comment>
<comment type="domain">
    <text evidence="2">A 7-bladed beta-propeller torus, about 55 by 55 Angstroms, with a depth of about 25 Angstroms and a central pore.</text>
</comment>
<comment type="similarity">
    <text evidence="2">Belongs to the Ycf48 family.</text>
</comment>
<sequence>MVIVKSWQKIFTLLVVLLLCIGCSKVPSTSYNPWAVVSLPTEAKLLDIAFTENPQHGFLVGSSATLLETNDGGNNWQPLNLALDDDRYRFDSVSFAGKEGWIVGEPSLLLHTTDEGRSWSRIPLSEKLPGNPIAIQALGTDIAEMATDVGAIYKTTDGGKNWKAQVEAAVGVVRNLERSVDGKYVAVSAKGSFYSTWEAGQNAWVPHNRNSSRRVENMGFSQDGLWLLARGGQVQFSDPANPDEWLDAETPELATSWGLLDMAYRTPNEVWIGGGSGNLLVSTDGGKTWEKDRDVEEVAANFYKVVFLKPDQGFVIGDRGVLLKYQPEAAKTATTEPAA</sequence>